<name>PKS31_DICDI</name>
<sequence>MTQNIDNNNNKLIRDRNDDDDVDRNDDGDVAVIGIGLRFPSGNLKESISKPNQLFNELLNGLDGIVSTSERWSDNYYLNGEIVSKFAGLLPLDEWKQFDPIFFAINQTYDNVSSIDPQQRLLLKCVWEALEDSGIDPISLRGTNTSTFIGNSTIDYYNLQRSPSETQNNIFGSSTHSIANRIGYCFDFRGENLTIDTACSSSSNAINCGYNSIKTNRSNVSIVGGVNIILDPHISKSFTQLDMLSPTGKCHTFSSDADGFVRSEGVGIVVLKKLKDAIKDSNNIYCVIKGSSSNIDGNFDKLNFYSPSKSSQCENIKLAIKSTNGQINESDIDYCETHGTGTPTGDPIELEGISRVFNSAKIPSTTINNNKQVLVGSIKSNIGHLEACSGVASLIKCCLMFKNKLFLQNINFKEPNPLINFKEWGLKVVTEPIKFNENKSTVMLVNNFGITGSNVCLILSELKKNHHNRYENEYHKIEIDSKVNEKKKYLIPLSSNSSTSLNNYKSSIIKLSNSNSSPTTTTSFKELVHNQIKFKSTSLIQKSVIIASDWNEFQDENNQIKLENSDNLISNITVEKKKSPITVMVLCGQGSQYNKMALSLYDNEPIFRESVNRFDKELFKYYGYSVLDKLRSIDDKDLISIHQPILAQPANVIIQVSLYELYKHWGVSADIIIGHSLGEVSSPYCSGMIDFQTLCYLIYHRSVAQNRTTGTGRMLSVNISSDEFINNYQSTTKYESLEIACYNSPTSIVIAGREDLLNEITNEFKSNNIFCTMLGLLSSFHTSSQQMIKDEVCSLNISSKQPSIAVFSTVTTNLFNHQSLPFNADYAFENIRQPVRFTQTITNLYKHIESNDMGNEITFIEVSPHPTLQYYLNQMKSTQSSYFNNGKNITIYSPLNKKKNDYNEFLKTISLLYVNNNFDINFKSQLINDNNNISNTTKLNNLPLYQWDDKEYFKIASFHEKIKSEGPSIHSLGNNTDSPYPSYQTFIDIKKSPFQWLKGHQVSDKFYYPGMGYVHNLLSIYPNQDITISSLEFKSPLVLTEGNNQCLQTTIAPLSKNEFNIKSHYKDQKTNQWILSSLGNFNLTKHNSIISNKLINIQSLKDKCNFTSISKQDFYETIRIKTNLTYKGLFQGVKQCYIGNNCSLSIVSLNEIYNQKEYNHLINNSNMNKFLNTAILDTCLHGSLVAVTQPVVLDRIEGFKYYFSNIPSLNENNNNDDIKELYVFSDIKPRTNYQTYSISVKIILPNGTLLVDISNVVCALVSLGSNPDSTIICKPPLNDIYTPYLQSKDSVVNKPEQFKHLYSVDEFSVNEEDNQFISNELLLSLFYKHINNRCPSINLESLTTLEYNQFKQLYYNSLVNENLFKFIFENLKRYSNILNHDNNQSNIKPKIEKIFIRTTKIMAKQLFPLKDDDSITDTPQSLFESGFLDDFYKNSRVVQPLNNLLSEIIVETLKPILNEPIVFRILEAGGGTGSLSLLILEKICKLLNDNSTTSIINIEFTWSDVSASFFAEIKEKFSSFTNHNNLNIIYRVLDLEKPLLDQDLKASYYDFVVMSNVMHVVKKLKPTLNEIHNILTPNGQLLYIEPPYKSFYFDSIFGCFSQWWPSSDGDIELRPDRCCMKQEKWVNLLSQCNYRDTIMSGNDNLLFLIQTRKPTINEIISEQSISLDQLNSFNNIILFSNNKNRNSCSSSILDLIRLNQELKHKIININNYNEFQSWITNNQNKDNCNKSLIIFLKSIESTMNTSNFKEITFEYIQINQLILKLELSNNFKHLLLSLNSTTDNYLSSSIIGAARYFVEFPQLDLYILNYDNVSIENNQQLSLINYLINPNNNIQKEFTINNNKVYYERYCRRSNNIKSKFQSESFETNKDNLYIQLNSNIEYQLYSKKDELNSNEVEIEVKATGINYKDYLMYIGMIGSDLDIKYGKEIEYGIGIDNPKIGNDFSGIITRLGSNVKKFKVGDQVCGFGSKTNSSHVIIDFNSIYYKPLNCSHSVSASIPSIYITTLHSIYSIGNLKSNESILIHSAAGGIGISSLDLLKSKQHQGYIFLTVGSKDKEEYLINKYGSLITAIYSSRNKDYVYEIKNKLIELGVVEQHQQGVDLILNTLSSEYMDSNFQCLNLSGRIVDLSITHLTPNDYMTNNHYKFNMNYGNVDIEDFPSKLIKRYLKKIIKMINSNKLELSVPIIEYSNNQFKDAIEYINQRKHIGKIIVNHNQDEFNRVYNNYQSNNNQIIMKHSYDISKLNIGKNILLTGQTGIVLEILKYLIKYSNHSIENIIILSKSKLKWELKLLINQSKFKKDNNIKFHFNQIDIEDSNKVNQVLNQLELNENITNIDSIIHFAFMIDIGDVQQVDMNRLNNAHGAKTIGAINLHNQSINRSWNIKQFIMASSVVSIFGSDQQCCYVSACSVIDSLSKYRHSIGLPSLAINLGAISSTGFVSRNNAIETMFKSSIVNLFSPQLVISSLDLFIQNQHQYPNYCLSDFNFEVLTPTLTNQYHSKFDYQINIVKKSNRIKSFSSGNSGANNEIIHSTILNKISELLSIDESKINEDLQLSQYGMDSLVIVQLKNFIDNQLGHNIITIQQLQNNKINQSIEIIKSAKNNNKNNNNNNNKNNSNNKNKNN</sequence>
<organism>
    <name type="scientific">Dictyostelium discoideum</name>
    <name type="common">Social amoeba</name>
    <dbReference type="NCBI Taxonomy" id="44689"/>
    <lineage>
        <taxon>Eukaryota</taxon>
        <taxon>Amoebozoa</taxon>
        <taxon>Evosea</taxon>
        <taxon>Eumycetozoa</taxon>
        <taxon>Dictyostelia</taxon>
        <taxon>Dictyosteliales</taxon>
        <taxon>Dictyosteliaceae</taxon>
        <taxon>Dictyostelium</taxon>
    </lineage>
</organism>
<protein>
    <recommendedName>
        <fullName>Probable polyketide synthase 31</fullName>
        <shortName>dipks31</shortName>
        <ecNumber>2.3.1.-</ecNumber>
    </recommendedName>
</protein>
<dbReference type="EC" id="2.3.1.-"/>
<dbReference type="EMBL" id="AAFI02000167">
    <property type="protein sequence ID" value="EAL62086.1"/>
    <property type="molecule type" value="Genomic_DNA"/>
</dbReference>
<dbReference type="RefSeq" id="XP_635590.1">
    <property type="nucleotide sequence ID" value="XM_630498.1"/>
</dbReference>
<dbReference type="SMR" id="Q54FQ1"/>
<dbReference type="STRING" id="44689.Q54FQ1"/>
<dbReference type="PaxDb" id="44689-DDB0235264"/>
<dbReference type="EnsemblProtists" id="EAL62086">
    <property type="protein sequence ID" value="EAL62086"/>
    <property type="gene ID" value="DDB_G0290703"/>
</dbReference>
<dbReference type="GeneID" id="8627787"/>
<dbReference type="KEGG" id="ddi:DDB_G0290703"/>
<dbReference type="dictyBase" id="DDB_G0290703">
    <property type="gene designation" value="pks31"/>
</dbReference>
<dbReference type="VEuPathDB" id="AmoebaDB:DDB_G0290703"/>
<dbReference type="eggNOG" id="KOG1202">
    <property type="taxonomic scope" value="Eukaryota"/>
</dbReference>
<dbReference type="HOGENOM" id="CLU_000022_31_5_1"/>
<dbReference type="InParanoid" id="Q54FQ1"/>
<dbReference type="OMA" id="MDVAYHS"/>
<dbReference type="PhylomeDB" id="Q54FQ1"/>
<dbReference type="PRO" id="PR:Q54FQ1"/>
<dbReference type="Proteomes" id="UP000002195">
    <property type="component" value="Chromosome 5"/>
</dbReference>
<dbReference type="GO" id="GO:0004315">
    <property type="term" value="F:3-oxoacyl-[acyl-carrier-protein] synthase activity"/>
    <property type="evidence" value="ECO:0007669"/>
    <property type="project" value="InterPro"/>
</dbReference>
<dbReference type="GO" id="GO:0016491">
    <property type="term" value="F:oxidoreductase activity"/>
    <property type="evidence" value="ECO:0007669"/>
    <property type="project" value="InterPro"/>
</dbReference>
<dbReference type="GO" id="GO:0006633">
    <property type="term" value="P:fatty acid biosynthetic process"/>
    <property type="evidence" value="ECO:0000318"/>
    <property type="project" value="GO_Central"/>
</dbReference>
<dbReference type="CDD" id="cd02440">
    <property type="entry name" value="AdoMet_MTases"/>
    <property type="match status" value="1"/>
</dbReference>
<dbReference type="CDD" id="cd05195">
    <property type="entry name" value="enoyl_red"/>
    <property type="match status" value="1"/>
</dbReference>
<dbReference type="CDD" id="cd08954">
    <property type="entry name" value="KR_1_FAS_SDR_x"/>
    <property type="match status" value="1"/>
</dbReference>
<dbReference type="CDD" id="cd00833">
    <property type="entry name" value="PKS"/>
    <property type="match status" value="1"/>
</dbReference>
<dbReference type="FunFam" id="3.10.129.110:FF:000009">
    <property type="entry name" value="Probable polyketide synthase 2"/>
    <property type="match status" value="1"/>
</dbReference>
<dbReference type="FunFam" id="3.40.366.10:FF:000002">
    <property type="entry name" value="Probable polyketide synthase 2"/>
    <property type="match status" value="1"/>
</dbReference>
<dbReference type="FunFam" id="3.40.50.150:FF:001165">
    <property type="entry name" value="Probable polyketide synthase 31"/>
    <property type="match status" value="1"/>
</dbReference>
<dbReference type="FunFam" id="3.40.47.10:FF:000091">
    <property type="entry name" value="Probable polyketide synthase 32"/>
    <property type="match status" value="1"/>
</dbReference>
<dbReference type="FunFam" id="3.40.50.720:FF:000794">
    <property type="entry name" value="Probable polyketide synthase 33"/>
    <property type="match status" value="1"/>
</dbReference>
<dbReference type="Gene3D" id="3.40.47.10">
    <property type="match status" value="1"/>
</dbReference>
<dbReference type="Gene3D" id="1.10.1200.10">
    <property type="entry name" value="ACP-like"/>
    <property type="match status" value="1"/>
</dbReference>
<dbReference type="Gene3D" id="3.40.366.10">
    <property type="entry name" value="Malonyl-Coenzyme A Acyl Carrier Protein, domain 2"/>
    <property type="match status" value="1"/>
</dbReference>
<dbReference type="Gene3D" id="3.90.180.10">
    <property type="entry name" value="Medium-chain alcohol dehydrogenases, catalytic domain"/>
    <property type="match status" value="1"/>
</dbReference>
<dbReference type="Gene3D" id="3.40.50.720">
    <property type="entry name" value="NAD(P)-binding Rossmann-like Domain"/>
    <property type="match status" value="2"/>
</dbReference>
<dbReference type="Gene3D" id="3.10.129.110">
    <property type="entry name" value="Polyketide synthase dehydratase"/>
    <property type="match status" value="1"/>
</dbReference>
<dbReference type="Gene3D" id="3.40.50.150">
    <property type="entry name" value="Vaccinia Virus protein VP39"/>
    <property type="match status" value="1"/>
</dbReference>
<dbReference type="InterPro" id="IPR001227">
    <property type="entry name" value="Ac_transferase_dom_sf"/>
</dbReference>
<dbReference type="InterPro" id="IPR036736">
    <property type="entry name" value="ACP-like_sf"/>
</dbReference>
<dbReference type="InterPro" id="IPR014043">
    <property type="entry name" value="Acyl_transferase_dom"/>
</dbReference>
<dbReference type="InterPro" id="IPR016035">
    <property type="entry name" value="Acyl_Trfase/lysoPLipase"/>
</dbReference>
<dbReference type="InterPro" id="IPR013154">
    <property type="entry name" value="ADH-like_N"/>
</dbReference>
<dbReference type="InterPro" id="IPR011032">
    <property type="entry name" value="GroES-like_sf"/>
</dbReference>
<dbReference type="InterPro" id="IPR018201">
    <property type="entry name" value="Ketoacyl_synth_AS"/>
</dbReference>
<dbReference type="InterPro" id="IPR014031">
    <property type="entry name" value="Ketoacyl_synth_C"/>
</dbReference>
<dbReference type="InterPro" id="IPR014030">
    <property type="entry name" value="Ketoacyl_synth_N"/>
</dbReference>
<dbReference type="InterPro" id="IPR016036">
    <property type="entry name" value="Malonyl_transacylase_ACP-bd"/>
</dbReference>
<dbReference type="InterPro" id="IPR013217">
    <property type="entry name" value="Methyltransf_12"/>
</dbReference>
<dbReference type="InterPro" id="IPR036291">
    <property type="entry name" value="NAD(P)-bd_dom_sf"/>
</dbReference>
<dbReference type="InterPro" id="IPR032821">
    <property type="entry name" value="PKS_assoc"/>
</dbReference>
<dbReference type="InterPro" id="IPR020841">
    <property type="entry name" value="PKS_Beta-ketoAc_synthase_dom"/>
</dbReference>
<dbReference type="InterPro" id="IPR042104">
    <property type="entry name" value="PKS_dehydratase_sf"/>
</dbReference>
<dbReference type="InterPro" id="IPR020843">
    <property type="entry name" value="PKS_ER"/>
</dbReference>
<dbReference type="InterPro" id="IPR013968">
    <property type="entry name" value="PKS_KR"/>
</dbReference>
<dbReference type="InterPro" id="IPR049900">
    <property type="entry name" value="PKS_mFAS_DH"/>
</dbReference>
<dbReference type="InterPro" id="IPR050444">
    <property type="entry name" value="Polyketide_Synthase"/>
</dbReference>
<dbReference type="InterPro" id="IPR009081">
    <property type="entry name" value="PP-bd_ACP"/>
</dbReference>
<dbReference type="InterPro" id="IPR029063">
    <property type="entry name" value="SAM-dependent_MTases_sf"/>
</dbReference>
<dbReference type="InterPro" id="IPR016039">
    <property type="entry name" value="Thiolase-like"/>
</dbReference>
<dbReference type="PANTHER" id="PTHR45681:SF5">
    <property type="entry name" value="POLYKETIDE SYNTHASE 27-RELATED"/>
    <property type="match status" value="1"/>
</dbReference>
<dbReference type="PANTHER" id="PTHR45681">
    <property type="entry name" value="POLYKETIDE SYNTHASE 44-RELATED"/>
    <property type="match status" value="1"/>
</dbReference>
<dbReference type="Pfam" id="PF23297">
    <property type="entry name" value="ACP_SdgA_C"/>
    <property type="match status" value="1"/>
</dbReference>
<dbReference type="Pfam" id="PF00698">
    <property type="entry name" value="Acyl_transf_1"/>
    <property type="match status" value="1"/>
</dbReference>
<dbReference type="Pfam" id="PF08240">
    <property type="entry name" value="ADH_N"/>
    <property type="match status" value="1"/>
</dbReference>
<dbReference type="Pfam" id="PF13602">
    <property type="entry name" value="ADH_zinc_N_2"/>
    <property type="match status" value="1"/>
</dbReference>
<dbReference type="Pfam" id="PF16197">
    <property type="entry name" value="KAsynt_C_assoc"/>
    <property type="match status" value="1"/>
</dbReference>
<dbReference type="Pfam" id="PF00109">
    <property type="entry name" value="ketoacyl-synt"/>
    <property type="match status" value="1"/>
</dbReference>
<dbReference type="Pfam" id="PF02801">
    <property type="entry name" value="Ketoacyl-synt_C"/>
    <property type="match status" value="1"/>
</dbReference>
<dbReference type="Pfam" id="PF08659">
    <property type="entry name" value="KR"/>
    <property type="match status" value="1"/>
</dbReference>
<dbReference type="Pfam" id="PF08242">
    <property type="entry name" value="Methyltransf_12"/>
    <property type="match status" value="1"/>
</dbReference>
<dbReference type="SMART" id="SM00827">
    <property type="entry name" value="PKS_AT"/>
    <property type="match status" value="1"/>
</dbReference>
<dbReference type="SMART" id="SM00829">
    <property type="entry name" value="PKS_ER"/>
    <property type="match status" value="1"/>
</dbReference>
<dbReference type="SMART" id="SM00822">
    <property type="entry name" value="PKS_KR"/>
    <property type="match status" value="1"/>
</dbReference>
<dbReference type="SMART" id="SM00825">
    <property type="entry name" value="PKS_KS"/>
    <property type="match status" value="1"/>
</dbReference>
<dbReference type="SUPFAM" id="SSF47336">
    <property type="entry name" value="ACP-like"/>
    <property type="match status" value="1"/>
</dbReference>
<dbReference type="SUPFAM" id="SSF52151">
    <property type="entry name" value="FabD/lysophospholipase-like"/>
    <property type="match status" value="1"/>
</dbReference>
<dbReference type="SUPFAM" id="SSF50129">
    <property type="entry name" value="GroES-like"/>
    <property type="match status" value="1"/>
</dbReference>
<dbReference type="SUPFAM" id="SSF51735">
    <property type="entry name" value="NAD(P)-binding Rossmann-fold domains"/>
    <property type="match status" value="2"/>
</dbReference>
<dbReference type="SUPFAM" id="SSF55048">
    <property type="entry name" value="Probable ACP-binding domain of malonyl-CoA ACP transacylase"/>
    <property type="match status" value="1"/>
</dbReference>
<dbReference type="SUPFAM" id="SSF53335">
    <property type="entry name" value="S-adenosyl-L-methionine-dependent methyltransferases"/>
    <property type="match status" value="1"/>
</dbReference>
<dbReference type="SUPFAM" id="SSF53901">
    <property type="entry name" value="Thiolase-like"/>
    <property type="match status" value="1"/>
</dbReference>
<dbReference type="PROSITE" id="PS50075">
    <property type="entry name" value="CARRIER"/>
    <property type="match status" value="1"/>
</dbReference>
<dbReference type="PROSITE" id="PS00606">
    <property type="entry name" value="KS3_1"/>
    <property type="match status" value="1"/>
</dbReference>
<dbReference type="PROSITE" id="PS52004">
    <property type="entry name" value="KS3_2"/>
    <property type="match status" value="1"/>
</dbReference>
<dbReference type="PROSITE" id="PS52019">
    <property type="entry name" value="PKS_MFAS_DH"/>
    <property type="match status" value="1"/>
</dbReference>
<comment type="function">
    <text evidence="1">Probable polyketide synthase.</text>
</comment>
<comment type="cofactor">
    <cofactor evidence="1">
        <name>pantetheine 4'-phosphate</name>
        <dbReference type="ChEBI" id="CHEBI:47942"/>
    </cofactor>
    <text evidence="1">Binds 1 phosphopantetheine covalently.</text>
</comment>
<comment type="domain">
    <text evidence="1">Modular protein that is responsible for the completion of one condensation-processing cycle. The beta-ketoacyl synthase region is responsible for the actual condensation reaction while the acyl/malonyl transferase region is responsible for incorporating carboxylic acids units onto an acyl carrier protein (ACP) domain (By similarity).</text>
</comment>
<comment type="miscellaneous">
    <text>Encoded by one of the numerous copies of polyketide synthase genes and clustered as a quartet pks29/pks30/pks31/pks32 in chromosome 5.</text>
</comment>
<accession>Q54FQ1</accession>
<proteinExistence type="inferred from homology"/>
<reference key="1">
    <citation type="journal article" date="2005" name="Nature">
        <title>The genome of the social amoeba Dictyostelium discoideum.</title>
        <authorList>
            <person name="Eichinger L."/>
            <person name="Pachebat J.A."/>
            <person name="Gloeckner G."/>
            <person name="Rajandream M.A."/>
            <person name="Sucgang R."/>
            <person name="Berriman M."/>
            <person name="Song J."/>
            <person name="Olsen R."/>
            <person name="Szafranski K."/>
            <person name="Xu Q."/>
            <person name="Tunggal B."/>
            <person name="Kummerfeld S."/>
            <person name="Madera M."/>
            <person name="Konfortov B.A."/>
            <person name="Rivero F."/>
            <person name="Bankier A.T."/>
            <person name="Lehmann R."/>
            <person name="Hamlin N."/>
            <person name="Davies R."/>
            <person name="Gaudet P."/>
            <person name="Fey P."/>
            <person name="Pilcher K."/>
            <person name="Chen G."/>
            <person name="Saunders D."/>
            <person name="Sodergren E.J."/>
            <person name="Davis P."/>
            <person name="Kerhornou A."/>
            <person name="Nie X."/>
            <person name="Hall N."/>
            <person name="Anjard C."/>
            <person name="Hemphill L."/>
            <person name="Bason N."/>
            <person name="Farbrother P."/>
            <person name="Desany B."/>
            <person name="Just E."/>
            <person name="Morio T."/>
            <person name="Rost R."/>
            <person name="Churcher C.M."/>
            <person name="Cooper J."/>
            <person name="Haydock S."/>
            <person name="van Driessche N."/>
            <person name="Cronin A."/>
            <person name="Goodhead I."/>
            <person name="Muzny D.M."/>
            <person name="Mourier T."/>
            <person name="Pain A."/>
            <person name="Lu M."/>
            <person name="Harper D."/>
            <person name="Lindsay R."/>
            <person name="Hauser H."/>
            <person name="James K.D."/>
            <person name="Quiles M."/>
            <person name="Madan Babu M."/>
            <person name="Saito T."/>
            <person name="Buchrieser C."/>
            <person name="Wardroper A."/>
            <person name="Felder M."/>
            <person name="Thangavelu M."/>
            <person name="Johnson D."/>
            <person name="Knights A."/>
            <person name="Loulseged H."/>
            <person name="Mungall K.L."/>
            <person name="Oliver K."/>
            <person name="Price C."/>
            <person name="Quail M.A."/>
            <person name="Urushihara H."/>
            <person name="Hernandez J."/>
            <person name="Rabbinowitsch E."/>
            <person name="Steffen D."/>
            <person name="Sanders M."/>
            <person name="Ma J."/>
            <person name="Kohara Y."/>
            <person name="Sharp S."/>
            <person name="Simmonds M.N."/>
            <person name="Spiegler S."/>
            <person name="Tivey A."/>
            <person name="Sugano S."/>
            <person name="White B."/>
            <person name="Walker D."/>
            <person name="Woodward J.R."/>
            <person name="Winckler T."/>
            <person name="Tanaka Y."/>
            <person name="Shaulsky G."/>
            <person name="Schleicher M."/>
            <person name="Weinstock G.M."/>
            <person name="Rosenthal A."/>
            <person name="Cox E.C."/>
            <person name="Chisholm R.L."/>
            <person name="Gibbs R.A."/>
            <person name="Loomis W.F."/>
            <person name="Platzer M."/>
            <person name="Kay R.R."/>
            <person name="Williams J.G."/>
            <person name="Dear P.H."/>
            <person name="Noegel A.A."/>
            <person name="Barrell B.G."/>
            <person name="Kuspa A."/>
        </authorList>
    </citation>
    <scope>NUCLEOTIDE SEQUENCE [LARGE SCALE GENOMIC DNA]</scope>
    <source>
        <strain>AX4</strain>
    </source>
</reference>
<reference key="2">
    <citation type="journal article" date="2007" name="Bioinformatics">
        <title>Polyketide synthase genes and the natural products potential of Dictyostelium discoideum.</title>
        <authorList>
            <person name="Zucko J."/>
            <person name="Skunca N."/>
            <person name="Curk T."/>
            <person name="Zupan B."/>
            <person name="Long P.F."/>
            <person name="Cullum J."/>
            <person name="Kessin R.H."/>
            <person name="Hranueli D."/>
        </authorList>
    </citation>
    <scope>IDENTIFICATION</scope>
</reference>
<feature type="chain" id="PRO_0000371391" description="Probable polyketide synthase 31">
    <location>
        <begin position="1"/>
        <end position="2623"/>
    </location>
</feature>
<feature type="domain" description="Ketosynthase family 3 (KS3)" evidence="3">
    <location>
        <begin position="27"/>
        <end position="461"/>
    </location>
</feature>
<feature type="domain" description="PKS/mFAS DH" evidence="4">
    <location>
        <begin position="959"/>
        <end position="1267"/>
    </location>
</feature>
<feature type="domain" description="Carrier" evidence="2">
    <location>
        <begin position="2524"/>
        <end position="2601"/>
    </location>
</feature>
<feature type="region of interest" description="Disordered" evidence="6">
    <location>
        <begin position="1"/>
        <end position="25"/>
    </location>
</feature>
<feature type="region of interest" description="Acyl/malonyl transferase">
    <location>
        <begin position="666"/>
        <end position="699"/>
    </location>
</feature>
<feature type="region of interest" description="N-terminal hotdog fold" evidence="4">
    <location>
        <begin position="959"/>
        <end position="1088"/>
    </location>
</feature>
<feature type="region of interest" description="C-terminal hotdog fold" evidence="4">
    <location>
        <begin position="1105"/>
        <end position="1267"/>
    </location>
</feature>
<feature type="region of interest" description="Disordered" evidence="6">
    <location>
        <begin position="2600"/>
        <end position="2623"/>
    </location>
</feature>
<feature type="compositionally biased region" description="Low complexity" evidence="6">
    <location>
        <begin position="1"/>
        <end position="11"/>
    </location>
</feature>
<feature type="compositionally biased region" description="Low complexity" evidence="6">
    <location>
        <begin position="2601"/>
        <end position="2623"/>
    </location>
</feature>
<feature type="active site" description="For beta-ketoacyl synthase activity" evidence="3">
    <location>
        <position position="199"/>
    </location>
</feature>
<feature type="active site" description="For beta-ketoacyl synthase activity" evidence="3">
    <location>
        <position position="338"/>
    </location>
</feature>
<feature type="active site" description="For beta-ketoacyl synthase activity" evidence="3">
    <location>
        <position position="384"/>
    </location>
</feature>
<feature type="active site" description="For acyl/malonyl transferase activity" evidence="5">
    <location>
        <position position="676"/>
    </location>
</feature>
<feature type="active site" description="Proton acceptor; for dehydratase activity" evidence="4">
    <location>
        <position position="1000"/>
    </location>
</feature>
<feature type="active site" description="Proton donor; for dehydratase activity" evidence="4">
    <location>
        <position position="1177"/>
    </location>
</feature>
<feature type="modified residue" description="O-(pantetheine 4'-phosphoryl)serine" evidence="2">
    <location>
        <position position="2561"/>
    </location>
</feature>
<keyword id="KW-0596">Phosphopantetheine</keyword>
<keyword id="KW-0597">Phosphoprotein</keyword>
<keyword id="KW-1185">Reference proteome</keyword>
<keyword id="KW-0808">Transferase</keyword>
<gene>
    <name type="primary">pks31</name>
    <name type="ORF">DDB_G0290703</name>
</gene>
<evidence type="ECO:0000250" key="1"/>
<evidence type="ECO:0000255" key="2">
    <source>
        <dbReference type="PROSITE-ProRule" id="PRU00258"/>
    </source>
</evidence>
<evidence type="ECO:0000255" key="3">
    <source>
        <dbReference type="PROSITE-ProRule" id="PRU01348"/>
    </source>
</evidence>
<evidence type="ECO:0000255" key="4">
    <source>
        <dbReference type="PROSITE-ProRule" id="PRU01363"/>
    </source>
</evidence>
<evidence type="ECO:0000255" key="5">
    <source>
        <dbReference type="PROSITE-ProRule" id="PRU10022"/>
    </source>
</evidence>
<evidence type="ECO:0000256" key="6">
    <source>
        <dbReference type="SAM" id="MobiDB-lite"/>
    </source>
</evidence>